<comment type="function">
    <text evidence="1">Formation of pseudouridine at positions 38, 39 and 40 in the anticodon stem and loop of transfer RNAs.</text>
</comment>
<comment type="catalytic activity">
    <reaction evidence="1">
        <text>uridine(38/39/40) in tRNA = pseudouridine(38/39/40) in tRNA</text>
        <dbReference type="Rhea" id="RHEA:22376"/>
        <dbReference type="Rhea" id="RHEA-COMP:10085"/>
        <dbReference type="Rhea" id="RHEA-COMP:10087"/>
        <dbReference type="ChEBI" id="CHEBI:65314"/>
        <dbReference type="ChEBI" id="CHEBI:65315"/>
        <dbReference type="EC" id="5.4.99.12"/>
    </reaction>
</comment>
<comment type="subunit">
    <text evidence="1">Homodimer.</text>
</comment>
<comment type="similarity">
    <text evidence="1">Belongs to the tRNA pseudouridine synthase TruA family.</text>
</comment>
<reference key="1">
    <citation type="submission" date="2006-02" db="EMBL/GenBank/DDBJ databases">
        <title>Complete sequence of chromosome of Jannaschia sp. CCS1.</title>
        <authorList>
            <consortium name="US DOE Joint Genome Institute"/>
            <person name="Copeland A."/>
            <person name="Lucas S."/>
            <person name="Lapidus A."/>
            <person name="Barry K."/>
            <person name="Detter J.C."/>
            <person name="Glavina del Rio T."/>
            <person name="Hammon N."/>
            <person name="Israni S."/>
            <person name="Pitluck S."/>
            <person name="Brettin T."/>
            <person name="Bruce D."/>
            <person name="Han C."/>
            <person name="Tapia R."/>
            <person name="Gilna P."/>
            <person name="Chertkov O."/>
            <person name="Saunders E."/>
            <person name="Schmutz J."/>
            <person name="Larimer F."/>
            <person name="Land M."/>
            <person name="Kyrpides N."/>
            <person name="Lykidis A."/>
            <person name="Moran M.A."/>
            <person name="Belas R."/>
            <person name="Ye W."/>
            <person name="Buchan A."/>
            <person name="Gonzalez J.M."/>
            <person name="Schell M.A."/>
            <person name="Richardson P."/>
        </authorList>
    </citation>
    <scope>NUCLEOTIDE SEQUENCE [LARGE SCALE GENOMIC DNA]</scope>
    <source>
        <strain>CCS1</strain>
    </source>
</reference>
<keyword id="KW-0413">Isomerase</keyword>
<keyword id="KW-1185">Reference proteome</keyword>
<keyword id="KW-0819">tRNA processing</keyword>
<organism>
    <name type="scientific">Jannaschia sp. (strain CCS1)</name>
    <dbReference type="NCBI Taxonomy" id="290400"/>
    <lineage>
        <taxon>Bacteria</taxon>
        <taxon>Pseudomonadati</taxon>
        <taxon>Pseudomonadota</taxon>
        <taxon>Alphaproteobacteria</taxon>
        <taxon>Rhodobacterales</taxon>
        <taxon>Roseobacteraceae</taxon>
        <taxon>Jannaschia</taxon>
    </lineage>
</organism>
<accession>Q28LN3</accession>
<protein>
    <recommendedName>
        <fullName evidence="1">tRNA pseudouridine synthase A</fullName>
        <ecNumber evidence="1">5.4.99.12</ecNumber>
    </recommendedName>
    <alternativeName>
        <fullName evidence="1">tRNA pseudouridine(38-40) synthase</fullName>
    </alternativeName>
    <alternativeName>
        <fullName evidence="1">tRNA pseudouridylate synthase I</fullName>
    </alternativeName>
    <alternativeName>
        <fullName evidence="1">tRNA-uridine isomerase I</fullName>
    </alternativeName>
</protein>
<dbReference type="EC" id="5.4.99.12" evidence="1"/>
<dbReference type="EMBL" id="CP000264">
    <property type="protein sequence ID" value="ABD56379.1"/>
    <property type="molecule type" value="Genomic_DNA"/>
</dbReference>
<dbReference type="RefSeq" id="WP_011456581.1">
    <property type="nucleotide sequence ID" value="NC_007802.1"/>
</dbReference>
<dbReference type="SMR" id="Q28LN3"/>
<dbReference type="STRING" id="290400.Jann_3462"/>
<dbReference type="KEGG" id="jan:Jann_3462"/>
<dbReference type="eggNOG" id="COG0101">
    <property type="taxonomic scope" value="Bacteria"/>
</dbReference>
<dbReference type="HOGENOM" id="CLU_014673_0_2_5"/>
<dbReference type="OrthoDB" id="9811823at2"/>
<dbReference type="Proteomes" id="UP000008326">
    <property type="component" value="Chromosome"/>
</dbReference>
<dbReference type="GO" id="GO:0003723">
    <property type="term" value="F:RNA binding"/>
    <property type="evidence" value="ECO:0007669"/>
    <property type="project" value="InterPro"/>
</dbReference>
<dbReference type="GO" id="GO:0160147">
    <property type="term" value="F:tRNA pseudouridine(38-40) synthase activity"/>
    <property type="evidence" value="ECO:0007669"/>
    <property type="project" value="UniProtKB-EC"/>
</dbReference>
<dbReference type="GO" id="GO:0031119">
    <property type="term" value="P:tRNA pseudouridine synthesis"/>
    <property type="evidence" value="ECO:0007669"/>
    <property type="project" value="UniProtKB-UniRule"/>
</dbReference>
<dbReference type="CDD" id="cd02570">
    <property type="entry name" value="PseudoU_synth_EcTruA"/>
    <property type="match status" value="1"/>
</dbReference>
<dbReference type="FunFam" id="3.30.70.580:FF:000001">
    <property type="entry name" value="tRNA pseudouridine synthase A"/>
    <property type="match status" value="1"/>
</dbReference>
<dbReference type="Gene3D" id="3.30.70.660">
    <property type="entry name" value="Pseudouridine synthase I, catalytic domain, C-terminal subdomain"/>
    <property type="match status" value="1"/>
</dbReference>
<dbReference type="Gene3D" id="3.30.70.580">
    <property type="entry name" value="Pseudouridine synthase I, catalytic domain, N-terminal subdomain"/>
    <property type="match status" value="1"/>
</dbReference>
<dbReference type="HAMAP" id="MF_00171">
    <property type="entry name" value="TruA"/>
    <property type="match status" value="1"/>
</dbReference>
<dbReference type="InterPro" id="IPR020103">
    <property type="entry name" value="PsdUridine_synth_cat_dom_sf"/>
</dbReference>
<dbReference type="InterPro" id="IPR001406">
    <property type="entry name" value="PsdUridine_synth_TruA"/>
</dbReference>
<dbReference type="InterPro" id="IPR020097">
    <property type="entry name" value="PsdUridine_synth_TruA_a/b_dom"/>
</dbReference>
<dbReference type="InterPro" id="IPR020095">
    <property type="entry name" value="PsdUridine_synth_TruA_C"/>
</dbReference>
<dbReference type="InterPro" id="IPR020094">
    <property type="entry name" value="TruA/RsuA/RluB/E/F_N"/>
</dbReference>
<dbReference type="NCBIfam" id="TIGR00071">
    <property type="entry name" value="hisT_truA"/>
    <property type="match status" value="1"/>
</dbReference>
<dbReference type="PANTHER" id="PTHR11142">
    <property type="entry name" value="PSEUDOURIDYLATE SYNTHASE"/>
    <property type="match status" value="1"/>
</dbReference>
<dbReference type="PANTHER" id="PTHR11142:SF0">
    <property type="entry name" value="TRNA PSEUDOURIDINE SYNTHASE-LIKE 1"/>
    <property type="match status" value="1"/>
</dbReference>
<dbReference type="Pfam" id="PF01416">
    <property type="entry name" value="PseudoU_synth_1"/>
    <property type="match status" value="2"/>
</dbReference>
<dbReference type="PIRSF" id="PIRSF001430">
    <property type="entry name" value="tRNA_psdUrid_synth"/>
    <property type="match status" value="1"/>
</dbReference>
<dbReference type="SUPFAM" id="SSF55120">
    <property type="entry name" value="Pseudouridine synthase"/>
    <property type="match status" value="1"/>
</dbReference>
<sequence length="261" mass="28917">MPRYAFRIEYDGHPFKGWQRQTDLPSVQGAVEAALAKLEADVPTIAAAGRTDTGVHALGQVAHADMQRDWDPFRLAEALNYHLKPAPVAITACARAHDDFHARFSATWRSYTYRMICRRAPLVHARGHAWAVRGTLDVTAMAEGARHLIGKHDFTTFRATHCQALSPIKTMDEIRVEEVSLPAGTEIRFHLKAQSFLHNQVRSIVGSLEHVGSGAWAPDDMRRALEACDRAECGTVAPPDGLYMTGVGYDEDPFADGWKDT</sequence>
<feature type="chain" id="PRO_1000017095" description="tRNA pseudouridine synthase A">
    <location>
        <begin position="1"/>
        <end position="261"/>
    </location>
</feature>
<feature type="active site" description="Nucleophile" evidence="1">
    <location>
        <position position="52"/>
    </location>
</feature>
<feature type="binding site" evidence="1">
    <location>
        <position position="111"/>
    </location>
    <ligand>
        <name>substrate</name>
    </ligand>
</feature>
<proteinExistence type="inferred from homology"/>
<gene>
    <name evidence="1" type="primary">truA</name>
    <name type="ordered locus">Jann_3462</name>
</gene>
<name>TRUA_JANSC</name>
<evidence type="ECO:0000255" key="1">
    <source>
        <dbReference type="HAMAP-Rule" id="MF_00171"/>
    </source>
</evidence>